<name>MURI_MYCBO</name>
<sequence length="271" mass="28643">MNSPLAPVGVFDSGVGGLTVARAIIDQLPDEDIVYVGDTGNGPYGPLTIPEIRAHALAIGDDLVGRGVKALVIACNSASSACLRDARERYQVPVVEVILPAVRRAVAATRNGRIGVIGTRATITSHAYQDAFAAARDTEITAVACPRFVDFVERGVTSGRQVLGLAQGYLEPLQRAEVDTLVLGCTHYPLLSGLIQLAMGENVTLVSSAEETAKEVVRVLTEIDLLRPHDAPPATRIFEATGDPEAFTKLAARFLGPVLGGVQPVHPSRIH</sequence>
<accession>P63636</accession>
<accession>A0A1R3XYF0</accession>
<accession>Q10626</accession>
<accession>X2BI28</accession>
<reference key="1">
    <citation type="journal article" date="2003" name="Proc. Natl. Acad. Sci. U.S.A.">
        <title>The complete genome sequence of Mycobacterium bovis.</title>
        <authorList>
            <person name="Garnier T."/>
            <person name="Eiglmeier K."/>
            <person name="Camus J.-C."/>
            <person name="Medina N."/>
            <person name="Mansoor H."/>
            <person name="Pryor M."/>
            <person name="Duthoy S."/>
            <person name="Grondin S."/>
            <person name="Lacroix C."/>
            <person name="Monsempe C."/>
            <person name="Simon S."/>
            <person name="Harris B."/>
            <person name="Atkin R."/>
            <person name="Doggett J."/>
            <person name="Mayes R."/>
            <person name="Keating L."/>
            <person name="Wheeler P.R."/>
            <person name="Parkhill J."/>
            <person name="Barrell B.G."/>
            <person name="Cole S.T."/>
            <person name="Gordon S.V."/>
            <person name="Hewinson R.G."/>
        </authorList>
    </citation>
    <scope>NUCLEOTIDE SEQUENCE [LARGE SCALE GENOMIC DNA]</scope>
    <source>
        <strain>ATCC BAA-935 / AF2122/97</strain>
    </source>
</reference>
<reference key="2">
    <citation type="journal article" date="2017" name="Genome Announc.">
        <title>Updated reference genome sequence and annotation of Mycobacterium bovis AF2122/97.</title>
        <authorList>
            <person name="Malone K.M."/>
            <person name="Farrell D."/>
            <person name="Stuber T.P."/>
            <person name="Schubert O.T."/>
            <person name="Aebersold R."/>
            <person name="Robbe-Austerman S."/>
            <person name="Gordon S.V."/>
        </authorList>
    </citation>
    <scope>NUCLEOTIDE SEQUENCE [LARGE SCALE GENOMIC DNA]</scope>
    <scope>GENOME REANNOTATION</scope>
    <source>
        <strain>ATCC BAA-935 / AF2122/97</strain>
    </source>
</reference>
<protein>
    <recommendedName>
        <fullName evidence="1">Glutamate racemase</fullName>
        <ecNumber evidence="1">5.1.1.3</ecNumber>
    </recommendedName>
</protein>
<evidence type="ECO:0000255" key="1">
    <source>
        <dbReference type="HAMAP-Rule" id="MF_00258"/>
    </source>
</evidence>
<comment type="function">
    <text evidence="1">Provides the (R)-glutamate required for cell wall biosynthesis.</text>
</comment>
<comment type="catalytic activity">
    <reaction evidence="1">
        <text>L-glutamate = D-glutamate</text>
        <dbReference type="Rhea" id="RHEA:12813"/>
        <dbReference type="ChEBI" id="CHEBI:29985"/>
        <dbReference type="ChEBI" id="CHEBI:29986"/>
        <dbReference type="EC" id="5.1.1.3"/>
    </reaction>
</comment>
<comment type="pathway">
    <text evidence="1">Cell wall biogenesis; peptidoglycan biosynthesis.</text>
</comment>
<comment type="similarity">
    <text evidence="1">Belongs to the aspartate/glutamate racemases family.</text>
</comment>
<proteinExistence type="inferred from homology"/>
<organism>
    <name type="scientific">Mycobacterium bovis (strain ATCC BAA-935 / AF2122/97)</name>
    <dbReference type="NCBI Taxonomy" id="233413"/>
    <lineage>
        <taxon>Bacteria</taxon>
        <taxon>Bacillati</taxon>
        <taxon>Actinomycetota</taxon>
        <taxon>Actinomycetes</taxon>
        <taxon>Mycobacteriales</taxon>
        <taxon>Mycobacteriaceae</taxon>
        <taxon>Mycobacterium</taxon>
        <taxon>Mycobacterium tuberculosis complex</taxon>
    </lineage>
</organism>
<feature type="chain" id="PRO_0000095490" description="Glutamate racemase">
    <location>
        <begin position="1"/>
        <end position="271"/>
    </location>
</feature>
<feature type="active site" description="Proton donor/acceptor" evidence="1">
    <location>
        <position position="75"/>
    </location>
</feature>
<feature type="active site" description="Proton donor/acceptor" evidence="1">
    <location>
        <position position="185"/>
    </location>
</feature>
<feature type="binding site" evidence="1">
    <location>
        <begin position="12"/>
        <end position="13"/>
    </location>
    <ligand>
        <name>substrate</name>
    </ligand>
</feature>
<feature type="binding site" evidence="1">
    <location>
        <begin position="44"/>
        <end position="45"/>
    </location>
    <ligand>
        <name>substrate</name>
    </ligand>
</feature>
<feature type="binding site" evidence="1">
    <location>
        <begin position="76"/>
        <end position="77"/>
    </location>
    <ligand>
        <name>substrate</name>
    </ligand>
</feature>
<feature type="binding site" evidence="1">
    <location>
        <begin position="186"/>
        <end position="187"/>
    </location>
    <ligand>
        <name>substrate</name>
    </ligand>
</feature>
<gene>
    <name evidence="1" type="primary">murI</name>
    <name type="ordered locus">BQ2027_MB1373</name>
</gene>
<keyword id="KW-0133">Cell shape</keyword>
<keyword id="KW-0961">Cell wall biogenesis/degradation</keyword>
<keyword id="KW-0413">Isomerase</keyword>
<keyword id="KW-0573">Peptidoglycan synthesis</keyword>
<keyword id="KW-1185">Reference proteome</keyword>
<dbReference type="EC" id="5.1.1.3" evidence="1"/>
<dbReference type="EMBL" id="LT708304">
    <property type="protein sequence ID" value="SIT99976.1"/>
    <property type="molecule type" value="Genomic_DNA"/>
</dbReference>
<dbReference type="RefSeq" id="NP_855027.1">
    <property type="nucleotide sequence ID" value="NC_002945.3"/>
</dbReference>
<dbReference type="RefSeq" id="WP_003406919.1">
    <property type="nucleotide sequence ID" value="NC_002945.4"/>
</dbReference>
<dbReference type="SMR" id="P63636"/>
<dbReference type="KEGG" id="mbo:BQ2027_MB1373"/>
<dbReference type="PATRIC" id="fig|233413.5.peg.1505"/>
<dbReference type="UniPathway" id="UPA00219"/>
<dbReference type="Proteomes" id="UP000001419">
    <property type="component" value="Chromosome"/>
</dbReference>
<dbReference type="GO" id="GO:0008881">
    <property type="term" value="F:glutamate racemase activity"/>
    <property type="evidence" value="ECO:0007669"/>
    <property type="project" value="UniProtKB-UniRule"/>
</dbReference>
<dbReference type="GO" id="GO:0071555">
    <property type="term" value="P:cell wall organization"/>
    <property type="evidence" value="ECO:0007669"/>
    <property type="project" value="UniProtKB-KW"/>
</dbReference>
<dbReference type="GO" id="GO:0009252">
    <property type="term" value="P:peptidoglycan biosynthetic process"/>
    <property type="evidence" value="ECO:0007669"/>
    <property type="project" value="UniProtKB-UniRule"/>
</dbReference>
<dbReference type="GO" id="GO:0008360">
    <property type="term" value="P:regulation of cell shape"/>
    <property type="evidence" value="ECO:0007669"/>
    <property type="project" value="UniProtKB-KW"/>
</dbReference>
<dbReference type="FunFam" id="3.40.50.1860:FF:000001">
    <property type="entry name" value="Glutamate racemase"/>
    <property type="match status" value="1"/>
</dbReference>
<dbReference type="Gene3D" id="3.40.50.1860">
    <property type="match status" value="2"/>
</dbReference>
<dbReference type="HAMAP" id="MF_00258">
    <property type="entry name" value="Glu_racemase"/>
    <property type="match status" value="1"/>
</dbReference>
<dbReference type="InterPro" id="IPR015942">
    <property type="entry name" value="Asp/Glu/hydantoin_racemase"/>
</dbReference>
<dbReference type="InterPro" id="IPR001920">
    <property type="entry name" value="Asp/Glu_race"/>
</dbReference>
<dbReference type="InterPro" id="IPR018187">
    <property type="entry name" value="Asp/Glu_racemase_AS_1"/>
</dbReference>
<dbReference type="InterPro" id="IPR033134">
    <property type="entry name" value="Asp/Glu_racemase_AS_2"/>
</dbReference>
<dbReference type="InterPro" id="IPR004391">
    <property type="entry name" value="Glu_race"/>
</dbReference>
<dbReference type="NCBIfam" id="TIGR00067">
    <property type="entry name" value="glut_race"/>
    <property type="match status" value="1"/>
</dbReference>
<dbReference type="PANTHER" id="PTHR21198">
    <property type="entry name" value="GLUTAMATE RACEMASE"/>
    <property type="match status" value="1"/>
</dbReference>
<dbReference type="PANTHER" id="PTHR21198:SF2">
    <property type="entry name" value="GLUTAMATE RACEMASE"/>
    <property type="match status" value="1"/>
</dbReference>
<dbReference type="Pfam" id="PF01177">
    <property type="entry name" value="Asp_Glu_race"/>
    <property type="match status" value="1"/>
</dbReference>
<dbReference type="SUPFAM" id="SSF53681">
    <property type="entry name" value="Aspartate/glutamate racemase"/>
    <property type="match status" value="2"/>
</dbReference>
<dbReference type="PROSITE" id="PS00923">
    <property type="entry name" value="ASP_GLU_RACEMASE_1"/>
    <property type="match status" value="1"/>
</dbReference>
<dbReference type="PROSITE" id="PS00924">
    <property type="entry name" value="ASP_GLU_RACEMASE_2"/>
    <property type="match status" value="1"/>
</dbReference>